<reference key="1">
    <citation type="journal article" date="2008" name="Genome Res.">
        <title>Insights from the complete genome sequence of Mycobacterium marinum on the evolution of Mycobacterium tuberculosis.</title>
        <authorList>
            <person name="Stinear T.P."/>
            <person name="Seemann T."/>
            <person name="Harrison P.F."/>
            <person name="Jenkin G.A."/>
            <person name="Davies J.K."/>
            <person name="Johnson P.D."/>
            <person name="Abdellah Z."/>
            <person name="Arrowsmith C."/>
            <person name="Chillingworth T."/>
            <person name="Churcher C."/>
            <person name="Clarke K."/>
            <person name="Cronin A."/>
            <person name="Davis P."/>
            <person name="Goodhead I."/>
            <person name="Holroyd N."/>
            <person name="Jagels K."/>
            <person name="Lord A."/>
            <person name="Moule S."/>
            <person name="Mungall K."/>
            <person name="Norbertczak H."/>
            <person name="Quail M.A."/>
            <person name="Rabbinowitsch E."/>
            <person name="Walker D."/>
            <person name="White B."/>
            <person name="Whitehead S."/>
            <person name="Small P.L."/>
            <person name="Brosch R."/>
            <person name="Ramakrishnan L."/>
            <person name="Fischbach M.A."/>
            <person name="Parkhill J."/>
            <person name="Cole S.T."/>
        </authorList>
    </citation>
    <scope>NUCLEOTIDE SEQUENCE [LARGE SCALE GENOMIC DNA]</scope>
    <source>
        <strain>ATCC BAA-535 / M</strain>
    </source>
</reference>
<accession>B2HJU9</accession>
<sequence length="297" mass="32818">MDVVRTPDARFQNLVGYPFAAHYVDVAATDTPHLRMHYIDEGPADGPPIVLLHGEPTWSYLYRTMIPPLAAGGYRVLAPDLIGFGRSDKPTRIADYTYLRHVEWVKSWFEELRLAEATLFVQDWGSLIGLRVAAEHGDAIARLVVANGFLPTARGRTPTAFHIWRAFARYSPVLPAGRLVAAGTVRKVPPAVRAGYDAPFPDKSYQAGARAFPQLVPISPDDPAVAANRAAWDALGRWEKPFLAIFGERDPLLGRADRPLIKHIPGAAGQPHARINANHFIQEDSGPELAERIISWQ</sequence>
<dbReference type="EC" id="3.8.1.5" evidence="2"/>
<dbReference type="EMBL" id="CP000854">
    <property type="protein sequence ID" value="ACC41891.1"/>
    <property type="molecule type" value="Genomic_DNA"/>
</dbReference>
<dbReference type="RefSeq" id="WP_012395104.1">
    <property type="nucleotide sequence ID" value="NC_010612.1"/>
</dbReference>
<dbReference type="SMR" id="B2HJU9"/>
<dbReference type="STRING" id="216594.MMAR_3472"/>
<dbReference type="ESTHER" id="mycmm-dhma">
    <property type="family name" value="Haloalkane_dehalogenase-HLD1"/>
</dbReference>
<dbReference type="GeneID" id="34342224"/>
<dbReference type="KEGG" id="mmi:MMAR_3472"/>
<dbReference type="eggNOG" id="COG0596">
    <property type="taxonomic scope" value="Bacteria"/>
</dbReference>
<dbReference type="HOGENOM" id="CLU_020336_13_3_11"/>
<dbReference type="OrthoDB" id="5431692at2"/>
<dbReference type="Proteomes" id="UP000001190">
    <property type="component" value="Chromosome"/>
</dbReference>
<dbReference type="GO" id="GO:0004301">
    <property type="term" value="F:epoxide hydrolase activity"/>
    <property type="evidence" value="ECO:0007669"/>
    <property type="project" value="TreeGrafter"/>
</dbReference>
<dbReference type="GO" id="GO:0018786">
    <property type="term" value="F:haloalkane dehalogenase activity"/>
    <property type="evidence" value="ECO:0007669"/>
    <property type="project" value="UniProtKB-UniRule"/>
</dbReference>
<dbReference type="Gene3D" id="3.40.50.1820">
    <property type="entry name" value="alpha/beta hydrolase"/>
    <property type="match status" value="1"/>
</dbReference>
<dbReference type="HAMAP" id="MF_01230">
    <property type="entry name" value="Haloalk_dehal_type1"/>
    <property type="match status" value="1"/>
</dbReference>
<dbReference type="InterPro" id="IPR000073">
    <property type="entry name" value="AB_hydrolase_1"/>
</dbReference>
<dbReference type="InterPro" id="IPR029058">
    <property type="entry name" value="AB_hydrolase_fold"/>
</dbReference>
<dbReference type="InterPro" id="IPR000639">
    <property type="entry name" value="Epox_hydrolase-like"/>
</dbReference>
<dbReference type="InterPro" id="IPR051340">
    <property type="entry name" value="Haloalkane_dehalogenase"/>
</dbReference>
<dbReference type="InterPro" id="IPR023489">
    <property type="entry name" value="Haloalkane_dehalogenase_1"/>
</dbReference>
<dbReference type="NCBIfam" id="NF002043">
    <property type="entry name" value="PRK00870.1"/>
    <property type="match status" value="1"/>
</dbReference>
<dbReference type="PANTHER" id="PTHR42977:SF3">
    <property type="entry name" value="AB HYDROLASE-1 DOMAIN-CONTAINING PROTEIN"/>
    <property type="match status" value="1"/>
</dbReference>
<dbReference type="PANTHER" id="PTHR42977">
    <property type="entry name" value="HYDROLASE-RELATED"/>
    <property type="match status" value="1"/>
</dbReference>
<dbReference type="Pfam" id="PF00561">
    <property type="entry name" value="Abhydrolase_1"/>
    <property type="match status" value="1"/>
</dbReference>
<dbReference type="PRINTS" id="PR00111">
    <property type="entry name" value="ABHYDROLASE"/>
</dbReference>
<dbReference type="PRINTS" id="PR00412">
    <property type="entry name" value="EPOXHYDRLASE"/>
</dbReference>
<dbReference type="SUPFAM" id="SSF53474">
    <property type="entry name" value="alpha/beta-Hydrolases"/>
    <property type="match status" value="1"/>
</dbReference>
<name>DHMA_MYCMM</name>
<protein>
    <recommendedName>
        <fullName evidence="2">Haloalkane dehalogenase</fullName>
        <ecNumber evidence="2">3.8.1.5</ecNumber>
    </recommendedName>
</protein>
<feature type="chain" id="PRO_1000139631" description="Haloalkane dehalogenase">
    <location>
        <begin position="1"/>
        <end position="297"/>
    </location>
</feature>
<feature type="domain" description="AB hydrolase-1" evidence="1">
    <location>
        <begin position="47"/>
        <end position="148"/>
    </location>
</feature>
<feature type="active site" description="Nucleophile" evidence="2">
    <location>
        <position position="123"/>
    </location>
</feature>
<feature type="active site" description="Proton donor" evidence="2">
    <location>
        <position position="250"/>
    </location>
</feature>
<feature type="active site" description="Proton acceptor" evidence="2">
    <location>
        <position position="279"/>
    </location>
</feature>
<gene>
    <name evidence="2" type="primary">dhmA</name>
    <name type="ordered locus">MMAR_3472</name>
</gene>
<evidence type="ECO:0000255" key="1"/>
<evidence type="ECO:0000255" key="2">
    <source>
        <dbReference type="HAMAP-Rule" id="MF_01230"/>
    </source>
</evidence>
<keyword id="KW-0378">Hydrolase</keyword>
<keyword id="KW-1185">Reference proteome</keyword>
<comment type="function">
    <text evidence="2">Catalyzes hydrolytic cleavage of carbon-halogen bonds in halogenated aliphatic compounds, leading to the formation of the corresponding primary alcohols, halide ions and protons.</text>
</comment>
<comment type="catalytic activity">
    <reaction evidence="2">
        <text>1-haloalkane + H2O = a halide anion + a primary alcohol + H(+)</text>
        <dbReference type="Rhea" id="RHEA:19081"/>
        <dbReference type="ChEBI" id="CHEBI:15377"/>
        <dbReference type="ChEBI" id="CHEBI:15378"/>
        <dbReference type="ChEBI" id="CHEBI:15734"/>
        <dbReference type="ChEBI" id="CHEBI:16042"/>
        <dbReference type="ChEBI" id="CHEBI:18060"/>
        <dbReference type="EC" id="3.8.1.5"/>
    </reaction>
</comment>
<comment type="subunit">
    <text evidence="2">Monomer.</text>
</comment>
<comment type="similarity">
    <text evidence="2">Belongs to the haloalkane dehalogenase family. Type 1 subfamily.</text>
</comment>
<organism>
    <name type="scientific">Mycobacterium marinum (strain ATCC BAA-535 / M)</name>
    <dbReference type="NCBI Taxonomy" id="216594"/>
    <lineage>
        <taxon>Bacteria</taxon>
        <taxon>Bacillati</taxon>
        <taxon>Actinomycetota</taxon>
        <taxon>Actinomycetes</taxon>
        <taxon>Mycobacteriales</taxon>
        <taxon>Mycobacteriaceae</taxon>
        <taxon>Mycobacterium</taxon>
        <taxon>Mycobacterium ulcerans group</taxon>
    </lineage>
</organism>
<proteinExistence type="inferred from homology"/>